<keyword id="KW-0175">Coiled coil</keyword>
<keyword id="KW-0256">Endoplasmic reticulum</keyword>
<keyword id="KW-0391">Immunity</keyword>
<keyword id="KW-0399">Innate immunity</keyword>
<keyword id="KW-0472">Membrane</keyword>
<keyword id="KW-0479">Metal-binding</keyword>
<keyword id="KW-1185">Reference proteome</keyword>
<keyword id="KW-0808">Transferase</keyword>
<keyword id="KW-0812">Transmembrane</keyword>
<keyword id="KW-1133">Transmembrane helix</keyword>
<keyword id="KW-0832">Ubl conjugation</keyword>
<keyword id="KW-0833">Ubl conjugation pathway</keyword>
<keyword id="KW-0862">Zinc</keyword>
<keyword id="KW-0863">Zinc-finger</keyword>
<proteinExistence type="evidence at transcript level"/>
<gene>
    <name type="primary">TRIM13</name>
    <name type="synonym">RFP2</name>
</gene>
<feature type="chain" id="PRO_0000416763" description="E3 ubiquitin-protein ligase TRIM13">
    <location>
        <begin position="1"/>
        <end position="407"/>
    </location>
</feature>
<feature type="transmembrane region" description="Helical" evidence="2">
    <location>
        <begin position="316"/>
        <end position="336"/>
    </location>
</feature>
<feature type="zinc finger region" description="RING-type" evidence="4">
    <location>
        <begin position="10"/>
        <end position="58"/>
    </location>
</feature>
<feature type="zinc finger region" description="B box-type" evidence="3">
    <location>
        <begin position="89"/>
        <end position="131"/>
    </location>
</feature>
<feature type="coiled-coil region" evidence="2">
    <location>
        <begin position="172"/>
        <end position="200"/>
    </location>
</feature>
<feature type="binding site" evidence="3">
    <location>
        <position position="94"/>
    </location>
    <ligand>
        <name>Zn(2+)</name>
        <dbReference type="ChEBI" id="CHEBI:29105"/>
    </ligand>
</feature>
<feature type="binding site" evidence="3">
    <location>
        <position position="97"/>
    </location>
    <ligand>
        <name>Zn(2+)</name>
        <dbReference type="ChEBI" id="CHEBI:29105"/>
    </ligand>
</feature>
<feature type="binding site" evidence="3">
    <location>
        <position position="117"/>
    </location>
    <ligand>
        <name>Zn(2+)</name>
        <dbReference type="ChEBI" id="CHEBI:29105"/>
    </ligand>
</feature>
<feature type="binding site" evidence="3">
    <location>
        <position position="123"/>
    </location>
    <ligand>
        <name>Zn(2+)</name>
        <dbReference type="ChEBI" id="CHEBI:29105"/>
    </ligand>
</feature>
<feature type="sequence conflict" description="In Ref. 2; AAI09750." evidence="5" ref="2">
    <original>P</original>
    <variation>H</variation>
    <location>
        <position position="55"/>
    </location>
</feature>
<organism>
    <name type="scientific">Bos taurus</name>
    <name type="common">Bovine</name>
    <dbReference type="NCBI Taxonomy" id="9913"/>
    <lineage>
        <taxon>Eukaryota</taxon>
        <taxon>Metazoa</taxon>
        <taxon>Chordata</taxon>
        <taxon>Craniata</taxon>
        <taxon>Vertebrata</taxon>
        <taxon>Euteleostomi</taxon>
        <taxon>Mammalia</taxon>
        <taxon>Eutheria</taxon>
        <taxon>Laurasiatheria</taxon>
        <taxon>Artiodactyla</taxon>
        <taxon>Ruminantia</taxon>
        <taxon>Pecora</taxon>
        <taxon>Bovidae</taxon>
        <taxon>Bovinae</taxon>
        <taxon>Bos</taxon>
    </lineage>
</organism>
<dbReference type="EC" id="2.3.2.27"/>
<dbReference type="EMBL" id="DAAA02032918">
    <property type="status" value="NOT_ANNOTATED_CDS"/>
    <property type="molecule type" value="Genomic_DNA"/>
</dbReference>
<dbReference type="EMBL" id="BC109749">
    <property type="protein sequence ID" value="AAI09750.1"/>
    <property type="molecule type" value="mRNA"/>
</dbReference>
<dbReference type="RefSeq" id="NP_001033254.1">
    <property type="nucleotide sequence ID" value="NM_001038165.2"/>
</dbReference>
<dbReference type="RefSeq" id="XP_005213714.1">
    <property type="nucleotide sequence ID" value="XM_005213657.3"/>
</dbReference>
<dbReference type="RefSeq" id="XP_005213715.1">
    <property type="nucleotide sequence ID" value="XM_005213658.4"/>
</dbReference>
<dbReference type="RefSeq" id="XP_059748064.1">
    <property type="nucleotide sequence ID" value="XM_059892081.1"/>
</dbReference>
<dbReference type="SMR" id="Q32L60"/>
<dbReference type="FunCoup" id="Q32L60">
    <property type="interactions" value="2997"/>
</dbReference>
<dbReference type="STRING" id="9913.ENSBTAP00000010745"/>
<dbReference type="PaxDb" id="9913-ENSBTAP00000010745"/>
<dbReference type="Ensembl" id="ENSBTAT00000010745.5">
    <property type="protein sequence ID" value="ENSBTAP00000010745.3"/>
    <property type="gene ID" value="ENSBTAG00000008173.5"/>
</dbReference>
<dbReference type="Ensembl" id="ENSBTAT00000102017.1">
    <property type="protein sequence ID" value="ENSBTAP00000084355.1"/>
    <property type="gene ID" value="ENSBTAG00000008173.5"/>
</dbReference>
<dbReference type="Ensembl" id="ENSBTAT00000107546.1">
    <property type="protein sequence ID" value="ENSBTAP00000092586.1"/>
    <property type="gene ID" value="ENSBTAG00000008173.5"/>
</dbReference>
<dbReference type="Ensembl" id="ENSBTAT00000112305.1">
    <property type="protein sequence ID" value="ENSBTAP00000091521.1"/>
    <property type="gene ID" value="ENSBTAG00000008173.5"/>
</dbReference>
<dbReference type="Ensembl" id="ENSBTAT00000116227.1">
    <property type="protein sequence ID" value="ENSBTAP00000101368.1"/>
    <property type="gene ID" value="ENSBTAG00000008173.5"/>
</dbReference>
<dbReference type="Ensembl" id="ENSBTAT00000122723.1">
    <property type="protein sequence ID" value="ENSBTAP00000075787.1"/>
    <property type="gene ID" value="ENSBTAG00000008173.5"/>
</dbReference>
<dbReference type="Ensembl" id="ENSBTAT00000126185.1">
    <property type="protein sequence ID" value="ENSBTAP00000076332.1"/>
    <property type="gene ID" value="ENSBTAG00000008173.5"/>
</dbReference>
<dbReference type="GeneID" id="535190"/>
<dbReference type="KEGG" id="bta:535190"/>
<dbReference type="CTD" id="10206"/>
<dbReference type="VEuPathDB" id="HostDB:ENSBTAG00000008173"/>
<dbReference type="VGNC" id="VGNC:36314">
    <property type="gene designation" value="TRIM13"/>
</dbReference>
<dbReference type="eggNOG" id="KOG2177">
    <property type="taxonomic scope" value="Eukaryota"/>
</dbReference>
<dbReference type="GeneTree" id="ENSGT00940000159715"/>
<dbReference type="HOGENOM" id="CLU_053708_0_0_1"/>
<dbReference type="InParanoid" id="Q32L60"/>
<dbReference type="OMA" id="WRQSPFK"/>
<dbReference type="OrthoDB" id="6105938at2759"/>
<dbReference type="TreeFam" id="TF331669"/>
<dbReference type="UniPathway" id="UPA00143"/>
<dbReference type="Proteomes" id="UP000009136">
    <property type="component" value="Chromosome 12"/>
</dbReference>
<dbReference type="Bgee" id="ENSBTAG00000008173">
    <property type="expression patterns" value="Expressed in spermatid and 105 other cell types or tissues"/>
</dbReference>
<dbReference type="GO" id="GO:0005737">
    <property type="term" value="C:cytoplasm"/>
    <property type="evidence" value="ECO:0000318"/>
    <property type="project" value="GO_Central"/>
</dbReference>
<dbReference type="GO" id="GO:0005789">
    <property type="term" value="C:endoplasmic reticulum membrane"/>
    <property type="evidence" value="ECO:0007669"/>
    <property type="project" value="UniProtKB-SubCell"/>
</dbReference>
<dbReference type="GO" id="GO:0061630">
    <property type="term" value="F:ubiquitin protein ligase activity"/>
    <property type="evidence" value="ECO:0000318"/>
    <property type="project" value="GO_Central"/>
</dbReference>
<dbReference type="GO" id="GO:0008270">
    <property type="term" value="F:zinc ion binding"/>
    <property type="evidence" value="ECO:0007669"/>
    <property type="project" value="UniProtKB-KW"/>
</dbReference>
<dbReference type="GO" id="GO:0036503">
    <property type="term" value="P:ERAD pathway"/>
    <property type="evidence" value="ECO:0000318"/>
    <property type="project" value="GO_Central"/>
</dbReference>
<dbReference type="GO" id="GO:0045087">
    <property type="term" value="P:innate immune response"/>
    <property type="evidence" value="ECO:0000318"/>
    <property type="project" value="GO_Central"/>
</dbReference>
<dbReference type="GO" id="GO:0043123">
    <property type="term" value="P:positive regulation of canonical NF-kappaB signal transduction"/>
    <property type="evidence" value="ECO:0000318"/>
    <property type="project" value="GO_Central"/>
</dbReference>
<dbReference type="GO" id="GO:0016239">
    <property type="term" value="P:positive regulation of macroautophagy"/>
    <property type="evidence" value="ECO:0000318"/>
    <property type="project" value="GO_Central"/>
</dbReference>
<dbReference type="GO" id="GO:0016567">
    <property type="term" value="P:protein ubiquitination"/>
    <property type="evidence" value="ECO:0007669"/>
    <property type="project" value="UniProtKB-UniPathway"/>
</dbReference>
<dbReference type="CDD" id="cd19767">
    <property type="entry name" value="Bbox2_TRIM13_C-XI"/>
    <property type="match status" value="1"/>
</dbReference>
<dbReference type="CDD" id="cd16762">
    <property type="entry name" value="RING-HC_TRIM13_C-V"/>
    <property type="match status" value="1"/>
</dbReference>
<dbReference type="FunFam" id="3.30.160.60:FF:001362">
    <property type="entry name" value="E3 ubiquitin-protein ligase TRIM13"/>
    <property type="match status" value="1"/>
</dbReference>
<dbReference type="FunFam" id="3.30.40.10:FF:000386">
    <property type="entry name" value="E3 ubiquitin-protein ligase TRIM13"/>
    <property type="match status" value="1"/>
</dbReference>
<dbReference type="Gene3D" id="3.30.160.60">
    <property type="entry name" value="Classic Zinc Finger"/>
    <property type="match status" value="1"/>
</dbReference>
<dbReference type="Gene3D" id="3.30.40.10">
    <property type="entry name" value="Zinc/RING finger domain, C3HC4 (zinc finger)"/>
    <property type="match status" value="1"/>
</dbReference>
<dbReference type="InterPro" id="IPR050143">
    <property type="entry name" value="TRIM/RBCC"/>
</dbReference>
<dbReference type="InterPro" id="IPR027370">
    <property type="entry name" value="Znf-RING_euk"/>
</dbReference>
<dbReference type="InterPro" id="IPR000315">
    <property type="entry name" value="Znf_B-box"/>
</dbReference>
<dbReference type="InterPro" id="IPR001841">
    <property type="entry name" value="Znf_RING"/>
</dbReference>
<dbReference type="InterPro" id="IPR013083">
    <property type="entry name" value="Znf_RING/FYVE/PHD"/>
</dbReference>
<dbReference type="InterPro" id="IPR017907">
    <property type="entry name" value="Znf_RING_CS"/>
</dbReference>
<dbReference type="PANTHER" id="PTHR24103">
    <property type="entry name" value="E3 UBIQUITIN-PROTEIN LIGASE TRIM"/>
    <property type="match status" value="1"/>
</dbReference>
<dbReference type="Pfam" id="PF00643">
    <property type="entry name" value="zf-B_box"/>
    <property type="match status" value="1"/>
</dbReference>
<dbReference type="Pfam" id="PF13445">
    <property type="entry name" value="zf-RING_UBOX"/>
    <property type="match status" value="1"/>
</dbReference>
<dbReference type="SMART" id="SM00336">
    <property type="entry name" value="BBOX"/>
    <property type="match status" value="1"/>
</dbReference>
<dbReference type="SMART" id="SM00184">
    <property type="entry name" value="RING"/>
    <property type="match status" value="1"/>
</dbReference>
<dbReference type="SUPFAM" id="SSF57845">
    <property type="entry name" value="B-box zinc-binding domain"/>
    <property type="match status" value="1"/>
</dbReference>
<dbReference type="SUPFAM" id="SSF57850">
    <property type="entry name" value="RING/U-box"/>
    <property type="match status" value="1"/>
</dbReference>
<dbReference type="PROSITE" id="PS50119">
    <property type="entry name" value="ZF_BBOX"/>
    <property type="match status" value="1"/>
</dbReference>
<dbReference type="PROSITE" id="PS00518">
    <property type="entry name" value="ZF_RING_1"/>
    <property type="match status" value="1"/>
</dbReference>
<dbReference type="PROSITE" id="PS50089">
    <property type="entry name" value="ZF_RING_2"/>
    <property type="match status" value="1"/>
</dbReference>
<reference key="1">
    <citation type="journal article" date="2009" name="Genome Biol.">
        <title>A whole-genome assembly of the domestic cow, Bos taurus.</title>
        <authorList>
            <person name="Zimin A.V."/>
            <person name="Delcher A.L."/>
            <person name="Florea L."/>
            <person name="Kelley D.R."/>
            <person name="Schatz M.C."/>
            <person name="Puiu D."/>
            <person name="Hanrahan F."/>
            <person name="Pertea G."/>
            <person name="Van Tassell C.P."/>
            <person name="Sonstegard T.S."/>
            <person name="Marcais G."/>
            <person name="Roberts M."/>
            <person name="Subramanian P."/>
            <person name="Yorke J.A."/>
            <person name="Salzberg S.L."/>
        </authorList>
    </citation>
    <scope>NUCLEOTIDE SEQUENCE [LARGE SCALE GENOMIC DNA]</scope>
    <source>
        <strain>Hereford</strain>
    </source>
</reference>
<reference key="2">
    <citation type="submission" date="2005-11" db="EMBL/GenBank/DDBJ databases">
        <authorList>
            <consortium name="NIH - Mammalian Gene Collection (MGC) project"/>
        </authorList>
    </citation>
    <scope>NUCLEOTIDE SEQUENCE [LARGE SCALE MRNA]</scope>
</reference>
<protein>
    <recommendedName>
        <fullName>E3 ubiquitin-protein ligase TRIM13</fullName>
        <ecNumber>2.3.2.27</ecNumber>
    </recommendedName>
    <alternativeName>
        <fullName>Putative tumor suppressor RFP2</fullName>
    </alternativeName>
    <alternativeName>
        <fullName evidence="5">RING-type E3 ubiquitin transferase TRIM13</fullName>
    </alternativeName>
    <alternativeName>
        <fullName>Ret finger protein 2</fullName>
    </alternativeName>
    <alternativeName>
        <fullName>Tripartite motif-containing protein 13</fullName>
    </alternativeName>
</protein>
<name>TRI13_BOVIN</name>
<comment type="function">
    <text evidence="1">Endoplasmic reticulum (ER) membrane anchored E3 ligase involved in the retrotranslocation and turnover of membrane and secretory proteins from the ER through a set of processes named ER-associated degradation (ERAD). This process acts on misfolded proteins as well as in the regulated degradation of correctly folded proteins. Enhances ionizing radiation-induced p53/TP53 stability and apoptosis via ubiquitinating MDM2 and AKT1 and decreasing AKT1 kinase activity through MDM2 and AKT1 proteasomal degradation. Regulates ER stress-induced autophagy, and may act as a tumor suppressor. Also plays a role in innate immune response by stimulating NF-kappa-B activity in the TLR2 signaling pathway. Ubiquitinates TRAF6 via the 'Lys-29'-linked polyubiquitination chain resulting in NF-kappa-B activation. Participates as well in T-cell receptor-mediated NF-kappa-B activation. In the presence of TNF, modulates the IKK complex by regulating IKBKG/NEMO ubiquitination leading to the repression of NF-kappa-B.</text>
</comment>
<comment type="catalytic activity">
    <reaction evidence="1">
        <text>S-ubiquitinyl-[E2 ubiquitin-conjugating enzyme]-L-cysteine + [acceptor protein]-L-lysine = [E2 ubiquitin-conjugating enzyme]-L-cysteine + N(6)-ubiquitinyl-[acceptor protein]-L-lysine.</text>
        <dbReference type="EC" id="2.3.2.27"/>
    </reaction>
</comment>
<comment type="pathway">
    <text evidence="1">Protein modification; protein ubiquitination.</text>
</comment>
<comment type="subunit">
    <text evidence="1">Interacts (via C-terminal domain) with VCP. Interacts with AKT1; the interaction ubiquitinates AKT1 and leads to its proteasomal degradation. Interacts with MDM2; the interaction ubiquitinates AKT1 and leads to its proteasomal degradation. Interacts with p62/SQSTM1. Interacts with TRAF6. Interacts with IKBKG/NEMO.</text>
</comment>
<comment type="subcellular location">
    <subcellularLocation>
        <location evidence="1">Endoplasmic reticulum membrane</location>
        <topology evidence="1">Single-pass membrane protein</topology>
    </subcellularLocation>
    <text evidence="1">Concentrates and colocalizes with p62/SQSTM1 and ZFYVE1 at the perinuclear endoplasmic reticulum.</text>
</comment>
<comment type="domain">
    <text evidence="1">The coiled-coil domain is required for the induction of autophagy during endoplasmic reticulum (ER) stress.</text>
</comment>
<comment type="domain">
    <text evidence="1">The RING-type zinc finger is required for auto-polyubiquitination.</text>
</comment>
<comment type="domain">
    <text evidence="1">The C-terminal transmembrane domain is indispensable for the localization to the ER.</text>
</comment>
<comment type="PTM">
    <text evidence="1">Auto-ubiquitinated; requires the RING-type zinc finger. Auto-polyubiquitination leads to proteasomal degradation.</text>
</comment>
<sequence>MELLEEDLTCPICCSLFDDPRVLPCSHNFCKKCLEGILEGNVRNSLWRSSPFKCPTCRKETSATGVNSLQVNYSLKGIVEKYNKIKVSPKMPVCKGHLGQPLNIFCLTDMQLICGICATRGEHTKHVFCSIEDAYAQERDAFESLFQSFETWRRGDALSRLDTLETSKRKSLQLLTKDSDKVKEFFEKLQYTLDQKKNEILSDFETMKLAVMQAYDPEINKLNTILQEQRMAFNIAEAFKDVSEPIIFLQQMQEFREKIKVIKETPLPPSNLPSSPLMKNFDTSQWEDIKLVDVDKLSLPQDTGTFISKIPWRLYPLFVVVILLGLLIFFSPTMFLEWSLFDEIATWKDNLSNFSSYLTRSADFVEQSVFYWEQLTDGLFIFSERLKSFTLVVLNNVAEFVCKYKLL</sequence>
<evidence type="ECO:0000250" key="1">
    <source>
        <dbReference type="UniProtKB" id="O60858"/>
    </source>
</evidence>
<evidence type="ECO:0000255" key="2"/>
<evidence type="ECO:0000255" key="3">
    <source>
        <dbReference type="PROSITE-ProRule" id="PRU00024"/>
    </source>
</evidence>
<evidence type="ECO:0000255" key="4">
    <source>
        <dbReference type="PROSITE-ProRule" id="PRU00175"/>
    </source>
</evidence>
<evidence type="ECO:0000305" key="5"/>
<accession>Q32L60</accession>
<accession>F1MGY4</accession>